<sequence length="1128" mass="125301">MMPMFLTVYLSNSEQHFTEVPVTPETICRDVVDLCKEPGENDCHLAEVWCGSERPVADNERMFDVLQRFGSQRNEVRFFLRHERPPNRDIVSGPRSQDPSVKRNGVKVPGEHRRKENGVNSPRLDLTLAELQEMASRQQQQIEAQQQMLATKEQRLKFLKQQDQRQQQQAAEQEKLKRLREIAESQEAKLKKVRALKGHVEQKRLSNGKLVEEIEQMNSLFQQKQRELVLAVSKVEELTRQLEMLKNGRIDGHHDNQSAVAELDRLYKELQLRNKLNQEQNAKLQQQRECLNKRNSEVAVMDKRVSELRDRLWKKKAALQQKENLPVSPDGNLPQQAVSAPSRVAAVGPYIQSSTMPRMPSRPELLVKPALPDGSLLMQSAEGPMKIQTLPNMRSGAASQSKGSKAHPASPDWNPSNADLLPSQGSSVPQSAGTALDQVDDGEIAVREKEKKVRPFSMFDTVDQCAAPPSFGTLRKNQSSEDILRDAQAVNKNVAKVPPPVPTKPKQIHLPYFGQTAQSPSDMKPDGNAQQLPIAATSVGAKLKPAGPQARMLLSPGAPSGGQDQVLSPASKQESPPAAAVRPFTPQPSKDTFPPAFRKPQTVAASSIYSMYTQQQAPGKNFQQAVQSALTKTQPRGPHFSSVYGKPVIAAAQNPQQHPENIYSCSQGKPGSPEPETETVSSVHESHENERIPRPLSPTKLLPFLSNPYRNQSDADLEALRKKLSNAPRPLKKRSSITEPEGPNGPNIQKLLYQRTTIAAMETISVPSHPSKSPGSVTVNPESSVEIPNPYLHVEPEKEVGSLVPEPLSPEDMGSASTENSDVPAPSAGLEYVSEGVTDSSTNLQNNVEETNPEAPHLLEVYLEEYPPYPPPPYPSGEPEVSEEDSARMRPPEITGQVSLPPGKRTNLRKTGSERIAHGMRVKFNPLALLLDSSLEGEFDLVQRIIYEVDDPSLPNDEGITALHNAVCAGHTEIVKFLVQFGVNVNAADSDGWTPLHCAASCNNVQVCKFLVESGAAVFAMTYSDMQTAADKCEEMEEGYTQCSQFLYGVQEKMGIMNKGVIYALWDYEPQHDDELLMKEGDCMTVIRREDEEEIEWWWARLNDKEGYVPRNLLGLYPRIKPRQRSLA</sequence>
<organism>
    <name type="scientific">Mus musculus</name>
    <name type="common">Mouse</name>
    <dbReference type="NCBI Taxonomy" id="10090"/>
    <lineage>
        <taxon>Eukaryota</taxon>
        <taxon>Metazoa</taxon>
        <taxon>Chordata</taxon>
        <taxon>Craniata</taxon>
        <taxon>Vertebrata</taxon>
        <taxon>Euteleostomi</taxon>
        <taxon>Mammalia</taxon>
        <taxon>Eutheria</taxon>
        <taxon>Euarchontoglires</taxon>
        <taxon>Glires</taxon>
        <taxon>Rodentia</taxon>
        <taxon>Myomorpha</taxon>
        <taxon>Muroidea</taxon>
        <taxon>Muridae</taxon>
        <taxon>Murinae</taxon>
        <taxon>Mus</taxon>
        <taxon>Mus</taxon>
    </lineage>
</organism>
<keyword id="KW-0040">ANK repeat</keyword>
<keyword id="KW-0053">Apoptosis</keyword>
<keyword id="KW-0131">Cell cycle</keyword>
<keyword id="KW-0963">Cytoplasm</keyword>
<keyword id="KW-0539">Nucleus</keyword>
<keyword id="KW-0597">Phosphoprotein</keyword>
<keyword id="KW-1185">Reference proteome</keyword>
<keyword id="KW-0677">Repeat</keyword>
<keyword id="KW-0728">SH3 domain</keyword>
<keyword id="KW-0729">SH3-binding</keyword>
<feature type="chain" id="PRO_0000066965" description="Apoptosis-stimulating of p53 protein 2">
    <location>
        <begin position="1"/>
        <end position="1128"/>
    </location>
</feature>
<feature type="repeat" description="ANK 1">
    <location>
        <begin position="958"/>
        <end position="987"/>
    </location>
</feature>
<feature type="repeat" description="ANK 2">
    <location>
        <begin position="991"/>
        <end position="1020"/>
    </location>
</feature>
<feature type="domain" description="SH3" evidence="4">
    <location>
        <begin position="1057"/>
        <end position="1119"/>
    </location>
</feature>
<feature type="region of interest" description="Disordered" evidence="5">
    <location>
        <begin position="85"/>
        <end position="120"/>
    </location>
</feature>
<feature type="region of interest" description="Interaction with APPBP1" evidence="1">
    <location>
        <begin position="332"/>
        <end position="348"/>
    </location>
</feature>
<feature type="region of interest" description="Disordered" evidence="5">
    <location>
        <begin position="393"/>
        <end position="436"/>
    </location>
</feature>
<feature type="region of interest" description="Disordered" evidence="5">
    <location>
        <begin position="549"/>
        <end position="596"/>
    </location>
</feature>
<feature type="region of interest" description="Disordered" evidence="5">
    <location>
        <begin position="654"/>
        <end position="705"/>
    </location>
</feature>
<feature type="region of interest" description="Disordered" evidence="5">
    <location>
        <begin position="723"/>
        <end position="748"/>
    </location>
</feature>
<feature type="region of interest" description="Disordered" evidence="5">
    <location>
        <begin position="802"/>
        <end position="824"/>
    </location>
</feature>
<feature type="region of interest" description="Disordered" evidence="5">
    <location>
        <begin position="870"/>
        <end position="907"/>
    </location>
</feature>
<feature type="region of interest" description="Mediates interaction with APC2" evidence="1">
    <location>
        <begin position="876"/>
        <end position="1128"/>
    </location>
</feature>
<feature type="short sequence motif" description="SH3-binding" evidence="3">
    <location>
        <begin position="866"/>
        <end position="875"/>
    </location>
</feature>
<feature type="compositionally biased region" description="Polar residues" evidence="5">
    <location>
        <begin position="413"/>
        <end position="433"/>
    </location>
</feature>
<feature type="compositionally biased region" description="Polar residues" evidence="5">
    <location>
        <begin position="562"/>
        <end position="574"/>
    </location>
</feature>
<feature type="compositionally biased region" description="Polar residues" evidence="5">
    <location>
        <begin position="654"/>
        <end position="669"/>
    </location>
</feature>
<feature type="compositionally biased region" description="Basic and acidic residues" evidence="5">
    <location>
        <begin position="684"/>
        <end position="693"/>
    </location>
</feature>
<feature type="modified residue" description="Phosphoserine" evidence="9">
    <location>
        <position position="479"/>
    </location>
</feature>
<feature type="modified residue" description="Phosphoserine" evidence="2">
    <location>
        <position position="555"/>
    </location>
</feature>
<feature type="modified residue" description="Phosphoserine" evidence="2">
    <location>
        <position position="568"/>
    </location>
</feature>
<feature type="modified residue" description="Phosphoserine" evidence="2">
    <location>
        <position position="571"/>
    </location>
</feature>
<feature type="modified residue" description="Phosphoserine" evidence="2">
    <location>
        <position position="575"/>
    </location>
</feature>
<feature type="modified residue" description="Phosphoserine" evidence="8">
    <location>
        <position position="697"/>
    </location>
</feature>
<feature type="modified residue" description="Phosphoserine" evidence="7">
    <location>
        <position position="713"/>
    </location>
</feature>
<feature type="modified residue" description="Phosphoserine" evidence="2">
    <location>
        <position position="736"/>
    </location>
</feature>
<feature type="sequence conflict" description="In Ref. 3; BAE22185." evidence="6" ref="3">
    <original>L</original>
    <variation>V</variation>
    <location>
        <position position="270"/>
    </location>
</feature>
<feature type="sequence conflict" description="In Ref. 2; AAH30894." evidence="6" ref="2">
    <original>VKPALPDGSLLMQSAE</original>
    <variation>DAWVAHASAHASAHAS</variation>
    <location>
        <begin position="367"/>
        <end position="382"/>
    </location>
</feature>
<accession>Q8CG79</accession>
<accession>Q3UYM7</accession>
<accession>Q8K2L5</accession>
<proteinExistence type="evidence at protein level"/>
<comment type="function">
    <text evidence="1 2">Regulator that plays a central role in regulation of apoptosis and cell growth via its interactions with proteins such as TP53 (By similarity). Regulates p53/TP53 by enhancing the DNA binding and transactivation function of p53/TP53 on the promoters of proapoptotic genes in vivo. Inhibits the ability of APPBP1 to conjugate NEDD8 to CUL1, and thereby decreases APPBP1 ability to induce apoptosis. Impedes cell cycle progression at G2/M. Its apoptosis-stimulating activity is inhibited by its interaction with DDX42 (By similarity).</text>
</comment>
<comment type="subunit">
    <text evidence="1 2">Interacts with P53/TP53; the interaction promotes pro-apoptotic activity (By similarity). Interacts with BCL2 (By similarity). Interacts with protein phosphatase 1. Interacts with RELA NF-kappa-B subunit. This interaction probably prevents the activation of apoptosis, possibly by preventing its interaction with p53/TP53. Interacts with APC2 and APPBP1. Interacts with DDX42 (via the C-terminus); the interaction is not inhibited by TP53BP2 ubiquitination and is independent of p53/TP53 (By similarity).</text>
</comment>
<comment type="subcellular location">
    <subcellularLocation>
        <location evidence="1">Cytoplasm</location>
        <location evidence="1">Perinuclear region</location>
    </subcellularLocation>
    <subcellularLocation>
        <location evidence="1">Nucleus</location>
    </subcellularLocation>
    <text evidence="1">Predominantly found in the perinuclear region. Some small fraction is nuclear.</text>
</comment>
<comment type="domain">
    <text evidence="1">The ankyrin repeats and the SH3 domain are required for a specific interactions with p53/TP53.</text>
</comment>
<comment type="similarity">
    <text evidence="6">Belongs to the ASPP family.</text>
</comment>
<comment type="sequence caution" evidence="6">
    <conflict type="frameshift">
        <sequence resource="EMBL" id="BC042874"/>
    </conflict>
</comment>
<protein>
    <recommendedName>
        <fullName>Apoptosis-stimulating of p53 protein 2</fullName>
    </recommendedName>
    <alternativeName>
        <fullName>Tumor suppressor p53-binding protein 2</fullName>
        <shortName>53BP2</shortName>
        <shortName>p53-binding protein 2</shortName>
        <shortName>p53BP2</shortName>
    </alternativeName>
</protein>
<evidence type="ECO:0000250" key="1"/>
<evidence type="ECO:0000250" key="2">
    <source>
        <dbReference type="UniProtKB" id="Q13625"/>
    </source>
</evidence>
<evidence type="ECO:0000255" key="3"/>
<evidence type="ECO:0000255" key="4">
    <source>
        <dbReference type="PROSITE-ProRule" id="PRU00192"/>
    </source>
</evidence>
<evidence type="ECO:0000256" key="5">
    <source>
        <dbReference type="SAM" id="MobiDB-lite"/>
    </source>
</evidence>
<evidence type="ECO:0000305" key="6"/>
<evidence type="ECO:0007744" key="7">
    <source>
    </source>
</evidence>
<evidence type="ECO:0007744" key="8">
    <source>
    </source>
</evidence>
<evidence type="ECO:0007744" key="9">
    <source>
    </source>
</evidence>
<reference key="1">
    <citation type="journal article" date="2009" name="PLoS Biol.">
        <title>Lineage-specific biology revealed by a finished genome assembly of the mouse.</title>
        <authorList>
            <person name="Church D.M."/>
            <person name="Goodstadt L."/>
            <person name="Hillier L.W."/>
            <person name="Zody M.C."/>
            <person name="Goldstein S."/>
            <person name="She X."/>
            <person name="Bult C.J."/>
            <person name="Agarwala R."/>
            <person name="Cherry J.L."/>
            <person name="DiCuccio M."/>
            <person name="Hlavina W."/>
            <person name="Kapustin Y."/>
            <person name="Meric P."/>
            <person name="Maglott D."/>
            <person name="Birtle Z."/>
            <person name="Marques A.C."/>
            <person name="Graves T."/>
            <person name="Zhou S."/>
            <person name="Teague B."/>
            <person name="Potamousis K."/>
            <person name="Churas C."/>
            <person name="Place M."/>
            <person name="Herschleb J."/>
            <person name="Runnheim R."/>
            <person name="Forrest D."/>
            <person name="Amos-Landgraf J."/>
            <person name="Schwartz D.C."/>
            <person name="Cheng Z."/>
            <person name="Lindblad-Toh K."/>
            <person name="Eichler E.E."/>
            <person name="Ponting C.P."/>
        </authorList>
    </citation>
    <scope>NUCLEOTIDE SEQUENCE [LARGE SCALE GENOMIC DNA]</scope>
    <source>
        <strain>C57BL/6J</strain>
    </source>
</reference>
<reference key="2">
    <citation type="journal article" date="2004" name="Genome Res.">
        <title>The status, quality, and expansion of the NIH full-length cDNA project: the Mammalian Gene Collection (MGC).</title>
        <authorList>
            <consortium name="The MGC Project Team"/>
        </authorList>
    </citation>
    <scope>NUCLEOTIDE SEQUENCE [LARGE SCALE MRNA]</scope>
    <source>
        <strain>C57BL/6J</strain>
        <strain>FVB/N</strain>
        <tissue>Brain</tissue>
        <tissue>Mammary tumor</tissue>
    </source>
</reference>
<reference key="3">
    <citation type="journal article" date="2005" name="Science">
        <title>The transcriptional landscape of the mammalian genome.</title>
        <authorList>
            <person name="Carninci P."/>
            <person name="Kasukawa T."/>
            <person name="Katayama S."/>
            <person name="Gough J."/>
            <person name="Frith M.C."/>
            <person name="Maeda N."/>
            <person name="Oyama R."/>
            <person name="Ravasi T."/>
            <person name="Lenhard B."/>
            <person name="Wells C."/>
            <person name="Kodzius R."/>
            <person name="Shimokawa K."/>
            <person name="Bajic V.B."/>
            <person name="Brenner S.E."/>
            <person name="Batalov S."/>
            <person name="Forrest A.R."/>
            <person name="Zavolan M."/>
            <person name="Davis M.J."/>
            <person name="Wilming L.G."/>
            <person name="Aidinis V."/>
            <person name="Allen J.E."/>
            <person name="Ambesi-Impiombato A."/>
            <person name="Apweiler R."/>
            <person name="Aturaliya R.N."/>
            <person name="Bailey T.L."/>
            <person name="Bansal M."/>
            <person name="Baxter L."/>
            <person name="Beisel K.W."/>
            <person name="Bersano T."/>
            <person name="Bono H."/>
            <person name="Chalk A.M."/>
            <person name="Chiu K.P."/>
            <person name="Choudhary V."/>
            <person name="Christoffels A."/>
            <person name="Clutterbuck D.R."/>
            <person name="Crowe M.L."/>
            <person name="Dalla E."/>
            <person name="Dalrymple B.P."/>
            <person name="de Bono B."/>
            <person name="Della Gatta G."/>
            <person name="di Bernardo D."/>
            <person name="Down T."/>
            <person name="Engstrom P."/>
            <person name="Fagiolini M."/>
            <person name="Faulkner G."/>
            <person name="Fletcher C.F."/>
            <person name="Fukushima T."/>
            <person name="Furuno M."/>
            <person name="Futaki S."/>
            <person name="Gariboldi M."/>
            <person name="Georgii-Hemming P."/>
            <person name="Gingeras T.R."/>
            <person name="Gojobori T."/>
            <person name="Green R.E."/>
            <person name="Gustincich S."/>
            <person name="Harbers M."/>
            <person name="Hayashi Y."/>
            <person name="Hensch T.K."/>
            <person name="Hirokawa N."/>
            <person name="Hill D."/>
            <person name="Huminiecki L."/>
            <person name="Iacono M."/>
            <person name="Ikeo K."/>
            <person name="Iwama A."/>
            <person name="Ishikawa T."/>
            <person name="Jakt M."/>
            <person name="Kanapin A."/>
            <person name="Katoh M."/>
            <person name="Kawasawa Y."/>
            <person name="Kelso J."/>
            <person name="Kitamura H."/>
            <person name="Kitano H."/>
            <person name="Kollias G."/>
            <person name="Krishnan S.P."/>
            <person name="Kruger A."/>
            <person name="Kummerfeld S.K."/>
            <person name="Kurochkin I.V."/>
            <person name="Lareau L.F."/>
            <person name="Lazarevic D."/>
            <person name="Lipovich L."/>
            <person name="Liu J."/>
            <person name="Liuni S."/>
            <person name="McWilliam S."/>
            <person name="Madan Babu M."/>
            <person name="Madera M."/>
            <person name="Marchionni L."/>
            <person name="Matsuda H."/>
            <person name="Matsuzawa S."/>
            <person name="Miki H."/>
            <person name="Mignone F."/>
            <person name="Miyake S."/>
            <person name="Morris K."/>
            <person name="Mottagui-Tabar S."/>
            <person name="Mulder N."/>
            <person name="Nakano N."/>
            <person name="Nakauchi H."/>
            <person name="Ng P."/>
            <person name="Nilsson R."/>
            <person name="Nishiguchi S."/>
            <person name="Nishikawa S."/>
            <person name="Nori F."/>
            <person name="Ohara O."/>
            <person name="Okazaki Y."/>
            <person name="Orlando V."/>
            <person name="Pang K.C."/>
            <person name="Pavan W.J."/>
            <person name="Pavesi G."/>
            <person name="Pesole G."/>
            <person name="Petrovsky N."/>
            <person name="Piazza S."/>
            <person name="Reed J."/>
            <person name="Reid J.F."/>
            <person name="Ring B.Z."/>
            <person name="Ringwald M."/>
            <person name="Rost B."/>
            <person name="Ruan Y."/>
            <person name="Salzberg S.L."/>
            <person name="Sandelin A."/>
            <person name="Schneider C."/>
            <person name="Schoenbach C."/>
            <person name="Sekiguchi K."/>
            <person name="Semple C.A."/>
            <person name="Seno S."/>
            <person name="Sessa L."/>
            <person name="Sheng Y."/>
            <person name="Shibata Y."/>
            <person name="Shimada H."/>
            <person name="Shimada K."/>
            <person name="Silva D."/>
            <person name="Sinclair B."/>
            <person name="Sperling S."/>
            <person name="Stupka E."/>
            <person name="Sugiura K."/>
            <person name="Sultana R."/>
            <person name="Takenaka Y."/>
            <person name="Taki K."/>
            <person name="Tammoja K."/>
            <person name="Tan S.L."/>
            <person name="Tang S."/>
            <person name="Taylor M.S."/>
            <person name="Tegner J."/>
            <person name="Teichmann S.A."/>
            <person name="Ueda H.R."/>
            <person name="van Nimwegen E."/>
            <person name="Verardo R."/>
            <person name="Wei C.L."/>
            <person name="Yagi K."/>
            <person name="Yamanishi H."/>
            <person name="Zabarovsky E."/>
            <person name="Zhu S."/>
            <person name="Zimmer A."/>
            <person name="Hide W."/>
            <person name="Bult C."/>
            <person name="Grimmond S.M."/>
            <person name="Teasdale R.D."/>
            <person name="Liu E.T."/>
            <person name="Brusic V."/>
            <person name="Quackenbush J."/>
            <person name="Wahlestedt C."/>
            <person name="Mattick J.S."/>
            <person name="Hume D.A."/>
            <person name="Kai C."/>
            <person name="Sasaki D."/>
            <person name="Tomaru Y."/>
            <person name="Fukuda S."/>
            <person name="Kanamori-Katayama M."/>
            <person name="Suzuki M."/>
            <person name="Aoki J."/>
            <person name="Arakawa T."/>
            <person name="Iida J."/>
            <person name="Imamura K."/>
            <person name="Itoh M."/>
            <person name="Kato T."/>
            <person name="Kawaji H."/>
            <person name="Kawagashira N."/>
            <person name="Kawashima T."/>
            <person name="Kojima M."/>
            <person name="Kondo S."/>
            <person name="Konno H."/>
            <person name="Nakano K."/>
            <person name="Ninomiya N."/>
            <person name="Nishio T."/>
            <person name="Okada M."/>
            <person name="Plessy C."/>
            <person name="Shibata K."/>
            <person name="Shiraki T."/>
            <person name="Suzuki S."/>
            <person name="Tagami M."/>
            <person name="Waki K."/>
            <person name="Watahiki A."/>
            <person name="Okamura-Oho Y."/>
            <person name="Suzuki H."/>
            <person name="Kawai J."/>
            <person name="Hayashizaki Y."/>
        </authorList>
    </citation>
    <scope>NUCLEOTIDE SEQUENCE [LARGE SCALE MRNA] OF 270-1128</scope>
    <source>
        <strain>C57BL/6J</strain>
        <tissue>Medulla oblongata</tissue>
    </source>
</reference>
<reference key="4">
    <citation type="journal article" date="2007" name="Proc. Natl. Acad. Sci. U.S.A.">
        <title>Large-scale phosphorylation analysis of mouse liver.</title>
        <authorList>
            <person name="Villen J."/>
            <person name="Beausoleil S.A."/>
            <person name="Gerber S.A."/>
            <person name="Gygi S.P."/>
        </authorList>
    </citation>
    <scope>PHOSPHORYLATION [LARGE SCALE ANALYSIS] AT SER-713</scope>
    <scope>IDENTIFICATION BY MASS SPECTROMETRY [LARGE SCALE ANALYSIS]</scope>
    <source>
        <tissue>Liver</tissue>
    </source>
</reference>
<reference key="5">
    <citation type="journal article" date="2009" name="Mol. Cell. Proteomics">
        <title>Large scale localization of protein phosphorylation by use of electron capture dissociation mass spectrometry.</title>
        <authorList>
            <person name="Sweet S.M."/>
            <person name="Bailey C.M."/>
            <person name="Cunningham D.L."/>
            <person name="Heath J.K."/>
            <person name="Cooper H.J."/>
        </authorList>
    </citation>
    <scope>PHOSPHORYLATION [LARGE SCALE ANALYSIS] AT SER-697</scope>
    <scope>IDENTIFICATION BY MASS SPECTROMETRY [LARGE SCALE ANALYSIS]</scope>
    <source>
        <tissue>Embryonic fibroblast</tissue>
    </source>
</reference>
<reference key="6">
    <citation type="journal article" date="2010" name="Cell">
        <title>A tissue-specific atlas of mouse protein phosphorylation and expression.</title>
        <authorList>
            <person name="Huttlin E.L."/>
            <person name="Jedrychowski M.P."/>
            <person name="Elias J.E."/>
            <person name="Goswami T."/>
            <person name="Rad R."/>
            <person name="Beausoleil S.A."/>
            <person name="Villen J."/>
            <person name="Haas W."/>
            <person name="Sowa M.E."/>
            <person name="Gygi S.P."/>
        </authorList>
    </citation>
    <scope>PHOSPHORYLATION [LARGE SCALE ANALYSIS] AT SER-479</scope>
    <scope>IDENTIFICATION BY MASS SPECTROMETRY [LARGE SCALE ANALYSIS]</scope>
    <source>
        <tissue>Brown adipose tissue</tissue>
        <tissue>Kidney</tissue>
        <tissue>Lung</tissue>
        <tissue>Pancreas</tissue>
        <tissue>Spleen</tissue>
    </source>
</reference>
<gene>
    <name type="primary">Tp53bp2</name>
    <name type="synonym">Aspp2</name>
    <name type="synonym">Trp53bp2</name>
</gene>
<dbReference type="EMBL" id="AC131742">
    <property type="status" value="NOT_ANNOTATED_CDS"/>
    <property type="molecule type" value="Genomic_DNA"/>
</dbReference>
<dbReference type="EMBL" id="BC030894">
    <property type="protein sequence ID" value="AAH30894.1"/>
    <property type="molecule type" value="mRNA"/>
</dbReference>
<dbReference type="EMBL" id="BC042874">
    <property type="status" value="NOT_ANNOTATED_CDS"/>
    <property type="molecule type" value="mRNA"/>
</dbReference>
<dbReference type="EMBL" id="CB248714">
    <property type="status" value="NOT_ANNOTATED_CDS"/>
    <property type="molecule type" value="mRNA"/>
</dbReference>
<dbReference type="EMBL" id="AK134556">
    <property type="protein sequence ID" value="BAE22185.1"/>
    <property type="molecule type" value="mRNA"/>
</dbReference>
<dbReference type="RefSeq" id="NP_775554.2">
    <property type="nucleotide sequence ID" value="NM_173378.2"/>
</dbReference>
<dbReference type="SMR" id="Q8CG79"/>
<dbReference type="BioGRID" id="229080">
    <property type="interactions" value="5"/>
</dbReference>
<dbReference type="FunCoup" id="Q8CG79">
    <property type="interactions" value="3219"/>
</dbReference>
<dbReference type="IntAct" id="Q8CG79">
    <property type="interactions" value="5"/>
</dbReference>
<dbReference type="STRING" id="10090.ENSMUSP00000112508"/>
<dbReference type="GlyGen" id="Q8CG79">
    <property type="glycosylation" value="5 sites, 1 N-linked glycan (1 site), 1 O-linked glycan (4 sites)"/>
</dbReference>
<dbReference type="iPTMnet" id="Q8CG79"/>
<dbReference type="PhosphoSitePlus" id="Q8CG79"/>
<dbReference type="jPOST" id="Q8CG79"/>
<dbReference type="PaxDb" id="10090-ENSMUSP00000112508"/>
<dbReference type="ProteomicsDB" id="277048"/>
<dbReference type="Pumba" id="Q8CG79"/>
<dbReference type="DNASU" id="209456"/>
<dbReference type="GeneID" id="209456"/>
<dbReference type="KEGG" id="mmu:209456"/>
<dbReference type="UCSC" id="uc007dyd.1">
    <property type="organism name" value="mouse"/>
</dbReference>
<dbReference type="AGR" id="MGI:2138319"/>
<dbReference type="CTD" id="209456"/>
<dbReference type="MGI" id="MGI:2138319">
    <property type="gene designation" value="Trp53bp2"/>
</dbReference>
<dbReference type="eggNOG" id="KOG0515">
    <property type="taxonomic scope" value="Eukaryota"/>
</dbReference>
<dbReference type="InParanoid" id="Q8CG79"/>
<dbReference type="OrthoDB" id="10038642at2759"/>
<dbReference type="PhylomeDB" id="Q8CG79"/>
<dbReference type="Reactome" id="R-MMU-6804759">
    <property type="pathway name" value="Regulation of TP53 Activity through Association with Co-factors"/>
</dbReference>
<dbReference type="BioGRID-ORCS" id="209456">
    <property type="hits" value="3 hits in 79 CRISPR screens"/>
</dbReference>
<dbReference type="ChiTaRS" id="Trp53bp2">
    <property type="organism name" value="mouse"/>
</dbReference>
<dbReference type="PRO" id="PR:Q8CG79"/>
<dbReference type="Proteomes" id="UP000000589">
    <property type="component" value="Unplaced"/>
</dbReference>
<dbReference type="RNAct" id="Q8CG79">
    <property type="molecule type" value="protein"/>
</dbReference>
<dbReference type="GO" id="GO:0005737">
    <property type="term" value="C:cytoplasm"/>
    <property type="evidence" value="ECO:0000250"/>
    <property type="project" value="UniProtKB"/>
</dbReference>
<dbReference type="GO" id="GO:0005634">
    <property type="term" value="C:nucleus"/>
    <property type="evidence" value="ECO:0000250"/>
    <property type="project" value="UniProtKB"/>
</dbReference>
<dbReference type="GO" id="GO:0048471">
    <property type="term" value="C:perinuclear region of cytoplasm"/>
    <property type="evidence" value="ECO:0007669"/>
    <property type="project" value="UniProtKB-SubCell"/>
</dbReference>
<dbReference type="GO" id="GO:0002039">
    <property type="term" value="F:p53 binding"/>
    <property type="evidence" value="ECO:0007669"/>
    <property type="project" value="InterPro"/>
</dbReference>
<dbReference type="GO" id="GO:0017124">
    <property type="term" value="F:SH3 domain binding"/>
    <property type="evidence" value="ECO:0007669"/>
    <property type="project" value="UniProtKB-KW"/>
</dbReference>
<dbReference type="GO" id="GO:0007417">
    <property type="term" value="P:central nervous system development"/>
    <property type="evidence" value="ECO:0000315"/>
    <property type="project" value="MGI"/>
</dbReference>
<dbReference type="GO" id="GO:0009792">
    <property type="term" value="P:embryo development ending in birth or egg hatching"/>
    <property type="evidence" value="ECO:0000316"/>
    <property type="project" value="MGI"/>
</dbReference>
<dbReference type="GO" id="GO:0007507">
    <property type="term" value="P:heart development"/>
    <property type="evidence" value="ECO:0000315"/>
    <property type="project" value="MGI"/>
</dbReference>
<dbReference type="GO" id="GO:0072332">
    <property type="term" value="P:intrinsic apoptotic signaling pathway by p53 class mediator"/>
    <property type="evidence" value="ECO:0000250"/>
    <property type="project" value="UniProtKB"/>
</dbReference>
<dbReference type="GO" id="GO:0042981">
    <property type="term" value="P:regulation of apoptotic process"/>
    <property type="evidence" value="ECO:0007669"/>
    <property type="project" value="InterPro"/>
</dbReference>
<dbReference type="GO" id="GO:0010212">
    <property type="term" value="P:response to ionizing radiation"/>
    <property type="evidence" value="ECO:0000315"/>
    <property type="project" value="MGI"/>
</dbReference>
<dbReference type="CDD" id="cd17225">
    <property type="entry name" value="RA_ASPP2"/>
    <property type="match status" value="1"/>
</dbReference>
<dbReference type="FunFam" id="1.25.40.20:FF:000008">
    <property type="entry name" value="Apoptosis-stimulating of p53 protein 2 isoform 1"/>
    <property type="match status" value="1"/>
</dbReference>
<dbReference type="FunFam" id="3.10.20.90:FF:000030">
    <property type="entry name" value="Apoptosis-stimulating of p53 protein 2 isoform 1"/>
    <property type="match status" value="1"/>
</dbReference>
<dbReference type="Gene3D" id="1.25.40.20">
    <property type="entry name" value="Ankyrin repeat-containing domain"/>
    <property type="match status" value="1"/>
</dbReference>
<dbReference type="Gene3D" id="3.10.20.90">
    <property type="entry name" value="Phosphatidylinositol 3-kinase Catalytic Subunit, Chain A, domain 1"/>
    <property type="match status" value="1"/>
</dbReference>
<dbReference type="InterPro" id="IPR002110">
    <property type="entry name" value="Ankyrin_rpt"/>
</dbReference>
<dbReference type="InterPro" id="IPR036770">
    <property type="entry name" value="Ankyrin_rpt-contain_sf"/>
</dbReference>
<dbReference type="InterPro" id="IPR047163">
    <property type="entry name" value="ASPP1/2"/>
</dbReference>
<dbReference type="InterPro" id="IPR048942">
    <property type="entry name" value="ASPP2-like_RA"/>
</dbReference>
<dbReference type="InterPro" id="IPR047166">
    <property type="entry name" value="ASPP2_RA"/>
</dbReference>
<dbReference type="InterPro" id="IPR036028">
    <property type="entry name" value="SH3-like_dom_sf"/>
</dbReference>
<dbReference type="InterPro" id="IPR001452">
    <property type="entry name" value="SH3_domain"/>
</dbReference>
<dbReference type="InterPro" id="IPR029071">
    <property type="entry name" value="Ubiquitin-like_domsf"/>
</dbReference>
<dbReference type="PANTHER" id="PTHR24131">
    <property type="entry name" value="APOPTOSIS-STIMULATING OF P53 PROTEIN"/>
    <property type="match status" value="1"/>
</dbReference>
<dbReference type="PANTHER" id="PTHR24131:SF8">
    <property type="entry name" value="APOPTOSIS-STIMULATING OF P53 PROTEIN 2"/>
    <property type="match status" value="1"/>
</dbReference>
<dbReference type="Pfam" id="PF12796">
    <property type="entry name" value="Ank_2"/>
    <property type="match status" value="1"/>
</dbReference>
<dbReference type="Pfam" id="PF21801">
    <property type="entry name" value="ASPP2-like_RA"/>
    <property type="match status" value="1"/>
</dbReference>
<dbReference type="Pfam" id="PF00018">
    <property type="entry name" value="SH3_1"/>
    <property type="match status" value="1"/>
</dbReference>
<dbReference type="SMART" id="SM00248">
    <property type="entry name" value="ANK"/>
    <property type="match status" value="2"/>
</dbReference>
<dbReference type="SMART" id="SM00326">
    <property type="entry name" value="SH3"/>
    <property type="match status" value="1"/>
</dbReference>
<dbReference type="SUPFAM" id="SSF48403">
    <property type="entry name" value="Ankyrin repeat"/>
    <property type="match status" value="1"/>
</dbReference>
<dbReference type="SUPFAM" id="SSF50044">
    <property type="entry name" value="SH3-domain"/>
    <property type="match status" value="1"/>
</dbReference>
<dbReference type="SUPFAM" id="SSF54236">
    <property type="entry name" value="Ubiquitin-like"/>
    <property type="match status" value="1"/>
</dbReference>
<dbReference type="PROSITE" id="PS50297">
    <property type="entry name" value="ANK_REP_REGION"/>
    <property type="match status" value="1"/>
</dbReference>
<dbReference type="PROSITE" id="PS50088">
    <property type="entry name" value="ANK_REPEAT"/>
    <property type="match status" value="2"/>
</dbReference>
<dbReference type="PROSITE" id="PS50002">
    <property type="entry name" value="SH3"/>
    <property type="match status" value="1"/>
</dbReference>
<name>ASPP2_MOUSE</name>